<name>CLP1_PYRO7</name>
<protein>
    <recommendedName>
        <fullName evidence="1">mRNA cleavage and polyadenylation factor CLP1</fullName>
    </recommendedName>
</protein>
<accession>A4QQE0</accession>
<accession>G4NFJ3</accession>
<reference key="1">
    <citation type="journal article" date="2005" name="Nature">
        <title>The genome sequence of the rice blast fungus Magnaporthe grisea.</title>
        <authorList>
            <person name="Dean R.A."/>
            <person name="Talbot N.J."/>
            <person name="Ebbole D.J."/>
            <person name="Farman M.L."/>
            <person name="Mitchell T.K."/>
            <person name="Orbach M.J."/>
            <person name="Thon M.R."/>
            <person name="Kulkarni R."/>
            <person name="Xu J.-R."/>
            <person name="Pan H."/>
            <person name="Read N.D."/>
            <person name="Lee Y.-H."/>
            <person name="Carbone I."/>
            <person name="Brown D."/>
            <person name="Oh Y.Y."/>
            <person name="Donofrio N."/>
            <person name="Jeong J.S."/>
            <person name="Soanes D.M."/>
            <person name="Djonovic S."/>
            <person name="Kolomiets E."/>
            <person name="Rehmeyer C."/>
            <person name="Li W."/>
            <person name="Harding M."/>
            <person name="Kim S."/>
            <person name="Lebrun M.-H."/>
            <person name="Bohnert H."/>
            <person name="Coughlan S."/>
            <person name="Butler J."/>
            <person name="Calvo S.E."/>
            <person name="Ma L.-J."/>
            <person name="Nicol R."/>
            <person name="Purcell S."/>
            <person name="Nusbaum C."/>
            <person name="Galagan J.E."/>
            <person name="Birren B.W."/>
        </authorList>
    </citation>
    <scope>NUCLEOTIDE SEQUENCE [LARGE SCALE GENOMIC DNA]</scope>
    <source>
        <strain>70-15 / ATCC MYA-4617 / FGSC 8958</strain>
    </source>
</reference>
<organism>
    <name type="scientific">Pyricularia oryzae (strain 70-15 / ATCC MYA-4617 / FGSC 8958)</name>
    <name type="common">Rice blast fungus</name>
    <name type="synonym">Magnaporthe oryzae</name>
    <dbReference type="NCBI Taxonomy" id="242507"/>
    <lineage>
        <taxon>Eukaryota</taxon>
        <taxon>Fungi</taxon>
        <taxon>Dikarya</taxon>
        <taxon>Ascomycota</taxon>
        <taxon>Pezizomycotina</taxon>
        <taxon>Sordariomycetes</taxon>
        <taxon>Sordariomycetidae</taxon>
        <taxon>Magnaporthales</taxon>
        <taxon>Pyriculariaceae</taxon>
        <taxon>Pyricularia</taxon>
    </lineage>
</organism>
<evidence type="ECO:0000255" key="1">
    <source>
        <dbReference type="HAMAP-Rule" id="MF_03035"/>
    </source>
</evidence>
<evidence type="ECO:0000256" key="2">
    <source>
        <dbReference type="SAM" id="MobiDB-lite"/>
    </source>
</evidence>
<evidence type="ECO:0000305" key="3"/>
<comment type="function">
    <text evidence="1">Required for endonucleolytic cleavage during polyadenylation-dependent pre-mRNA 3'-end formation.</text>
</comment>
<comment type="subunit">
    <text evidence="1">Component of a pre-mRNA cleavage factor complex. Interacts directly with PCF11.</text>
</comment>
<comment type="subcellular location">
    <subcellularLocation>
        <location evidence="1">Nucleus</location>
    </subcellularLocation>
</comment>
<comment type="similarity">
    <text evidence="1">Belongs to the Clp1 family. Clp1 subfamily.</text>
</comment>
<comment type="caution">
    <text evidence="3">May lack the polyribonucleotide 5'-hydroxyl-kinase and polynucleotide 5'-hydroxyl-kinase activities that are characteristic of the human ortholog.</text>
</comment>
<proteinExistence type="inferred from homology"/>
<sequence>MSIPGLGLIPEKPATSASRTYTLEPRQEYRFSVSHGASITITLTRGTAERDGTELALNVAYTLSGVKSKILSWHGANLSIEGITDHESVAGPDDAANTAHLNLHAFLQRSREAAARNNGGGRSAPHGPRVLVAGKTGCGRTSLVRTLAAWATRTGAQPMVVDADPGEGLLTLPGTLSAAVFGTVMDVASEGGWGAAPSSGPSAVPVKLPLVFYYGRRRVEEDRDLYKGVVNSISSAISARAADDPAVRSAGMLIDTPPYVEGKGADVLIHIAEELNVNIIVTIDTPSLHTELTQRFSGVKNVLGEHVSVVALDKSSGVMERDEGFLQHMGEASIKEYFFGDAKITLSPFTQQVAFDELAIYTSPEASDYSAEPGALERIPQPLPEMAHWVLAMMDAAPNDPPHKIRYAPVSGFVYVAAVDKERRRMKILAPVSGRLGDKPLVWGKWPEPHINLLG</sequence>
<gene>
    <name evidence="1" type="primary">CLP1</name>
    <name type="ORF">MGG_08804</name>
</gene>
<feature type="chain" id="PRO_0000375209" description="mRNA cleavage and polyadenylation factor CLP1">
    <location>
        <begin position="1"/>
        <end position="455"/>
    </location>
</feature>
<feature type="region of interest" description="Disordered" evidence="2">
    <location>
        <begin position="112"/>
        <end position="131"/>
    </location>
</feature>
<feature type="binding site" evidence="1">
    <location>
        <position position="28"/>
    </location>
    <ligand>
        <name>ATP</name>
        <dbReference type="ChEBI" id="CHEBI:30616"/>
    </ligand>
</feature>
<feature type="binding site" evidence="1">
    <location>
        <position position="67"/>
    </location>
    <ligand>
        <name>ATP</name>
        <dbReference type="ChEBI" id="CHEBI:30616"/>
    </ligand>
</feature>
<feature type="binding site" evidence="1">
    <location>
        <begin position="137"/>
        <end position="142"/>
    </location>
    <ligand>
        <name>ATP</name>
        <dbReference type="ChEBI" id="CHEBI:30616"/>
    </ligand>
</feature>
<dbReference type="EMBL" id="CM001236">
    <property type="protein sequence ID" value="EHA46800.1"/>
    <property type="molecule type" value="Genomic_DNA"/>
</dbReference>
<dbReference type="RefSeq" id="XP_003719167.1">
    <property type="nucleotide sequence ID" value="XM_003719119.1"/>
</dbReference>
<dbReference type="SMR" id="A4QQE0"/>
<dbReference type="FunCoup" id="A4QQE0">
    <property type="interactions" value="808"/>
</dbReference>
<dbReference type="STRING" id="242507.A4QQE0"/>
<dbReference type="EnsemblFungi" id="MGG_08804T0">
    <property type="protein sequence ID" value="MGG_08804T0"/>
    <property type="gene ID" value="MGG_08804"/>
</dbReference>
<dbReference type="GeneID" id="2678970"/>
<dbReference type="KEGG" id="mgr:MGG_08804"/>
<dbReference type="VEuPathDB" id="FungiDB:MGG_08804"/>
<dbReference type="eggNOG" id="KOG2749">
    <property type="taxonomic scope" value="Eukaryota"/>
</dbReference>
<dbReference type="HOGENOM" id="CLU_018195_3_1_1"/>
<dbReference type="InParanoid" id="A4QQE0"/>
<dbReference type="OMA" id="VQYVNCH"/>
<dbReference type="OrthoDB" id="258143at2759"/>
<dbReference type="Proteomes" id="UP000009058">
    <property type="component" value="Chromosome 6"/>
</dbReference>
<dbReference type="GO" id="GO:0005849">
    <property type="term" value="C:mRNA cleavage factor complex"/>
    <property type="evidence" value="ECO:0007669"/>
    <property type="project" value="UniProtKB-UniRule"/>
</dbReference>
<dbReference type="GO" id="GO:0005524">
    <property type="term" value="F:ATP binding"/>
    <property type="evidence" value="ECO:0007669"/>
    <property type="project" value="UniProtKB-UniRule"/>
</dbReference>
<dbReference type="GO" id="GO:0051731">
    <property type="term" value="F:polynucleotide 5'-hydroxyl-kinase activity"/>
    <property type="evidence" value="ECO:0007669"/>
    <property type="project" value="InterPro"/>
</dbReference>
<dbReference type="GO" id="GO:0031124">
    <property type="term" value="P:mRNA 3'-end processing"/>
    <property type="evidence" value="ECO:0007669"/>
    <property type="project" value="UniProtKB-UniRule"/>
</dbReference>
<dbReference type="GO" id="GO:0006388">
    <property type="term" value="P:tRNA splicing, via endonucleolytic cleavage and ligation"/>
    <property type="evidence" value="ECO:0007669"/>
    <property type="project" value="TreeGrafter"/>
</dbReference>
<dbReference type="Gene3D" id="2.60.120.1030">
    <property type="entry name" value="Clp1, DNA binding domain"/>
    <property type="match status" value="1"/>
</dbReference>
<dbReference type="Gene3D" id="3.40.50.300">
    <property type="entry name" value="P-loop containing nucleotide triphosphate hydrolases"/>
    <property type="match status" value="1"/>
</dbReference>
<dbReference type="Gene3D" id="2.40.30.330">
    <property type="entry name" value="Pre-mRNA cleavage complex subunit Clp1, C-terminal domain"/>
    <property type="match status" value="1"/>
</dbReference>
<dbReference type="HAMAP" id="MF_03035">
    <property type="entry name" value="Clp1"/>
    <property type="match status" value="1"/>
</dbReference>
<dbReference type="InterPro" id="IPR028606">
    <property type="entry name" value="Clp1"/>
</dbReference>
<dbReference type="InterPro" id="IPR045116">
    <property type="entry name" value="Clp1/Grc3"/>
</dbReference>
<dbReference type="InterPro" id="IPR010655">
    <property type="entry name" value="Clp1_C"/>
</dbReference>
<dbReference type="InterPro" id="IPR038238">
    <property type="entry name" value="Clp1_C_sf"/>
</dbReference>
<dbReference type="InterPro" id="IPR032324">
    <property type="entry name" value="Clp1_N"/>
</dbReference>
<dbReference type="InterPro" id="IPR038239">
    <property type="entry name" value="Clp1_N_sf"/>
</dbReference>
<dbReference type="InterPro" id="IPR032319">
    <property type="entry name" value="CLP1_P"/>
</dbReference>
<dbReference type="InterPro" id="IPR027417">
    <property type="entry name" value="P-loop_NTPase"/>
</dbReference>
<dbReference type="PANTHER" id="PTHR12755">
    <property type="entry name" value="CLEAVAGE/POLYADENYLATION FACTOR IA SUBUNIT CLP1P"/>
    <property type="match status" value="1"/>
</dbReference>
<dbReference type="PANTHER" id="PTHR12755:SF6">
    <property type="entry name" value="POLYRIBONUCLEOTIDE 5'-HYDROXYL-KINASE CLP1"/>
    <property type="match status" value="1"/>
</dbReference>
<dbReference type="Pfam" id="PF06807">
    <property type="entry name" value="Clp1"/>
    <property type="match status" value="1"/>
</dbReference>
<dbReference type="Pfam" id="PF16573">
    <property type="entry name" value="CLP1_N"/>
    <property type="match status" value="1"/>
</dbReference>
<dbReference type="Pfam" id="PF16575">
    <property type="entry name" value="CLP1_P"/>
    <property type="match status" value="1"/>
</dbReference>
<dbReference type="SUPFAM" id="SSF52540">
    <property type="entry name" value="P-loop containing nucleoside triphosphate hydrolases"/>
    <property type="match status" value="1"/>
</dbReference>
<keyword id="KW-0067">ATP-binding</keyword>
<keyword id="KW-0507">mRNA processing</keyword>
<keyword id="KW-0547">Nucleotide-binding</keyword>
<keyword id="KW-0539">Nucleus</keyword>
<keyword id="KW-1185">Reference proteome</keyword>